<dbReference type="EMBL" id="BA000033">
    <property type="protein sequence ID" value="BAB95201.1"/>
    <property type="molecule type" value="Genomic_DNA"/>
</dbReference>
<dbReference type="RefSeq" id="WP_000241308.1">
    <property type="nucleotide sequence ID" value="NC_003923.1"/>
</dbReference>
<dbReference type="SMR" id="Q7A0V5"/>
<dbReference type="KEGG" id="sam:MW1336"/>
<dbReference type="HOGENOM" id="CLU_105319_0_0_9"/>
<dbReference type="Gene3D" id="3.40.50.450">
    <property type="match status" value="1"/>
</dbReference>
<dbReference type="HAMAP" id="MF_01575">
    <property type="entry name" value="UPF0398"/>
    <property type="match status" value="1"/>
</dbReference>
<dbReference type="InterPro" id="IPR010697">
    <property type="entry name" value="YspA"/>
</dbReference>
<dbReference type="NCBIfam" id="NF010181">
    <property type="entry name" value="PRK13660.1"/>
    <property type="match status" value="1"/>
</dbReference>
<dbReference type="PANTHER" id="PTHR38440:SF1">
    <property type="entry name" value="UPF0398 PROTEIN SPR0331"/>
    <property type="match status" value="1"/>
</dbReference>
<dbReference type="PANTHER" id="PTHR38440">
    <property type="entry name" value="UPF0398 PROTEIN YPSA"/>
    <property type="match status" value="1"/>
</dbReference>
<dbReference type="Pfam" id="PF06908">
    <property type="entry name" value="YpsA"/>
    <property type="match status" value="1"/>
</dbReference>
<dbReference type="PIRSF" id="PIRSF021290">
    <property type="entry name" value="DUF1273"/>
    <property type="match status" value="1"/>
</dbReference>
<dbReference type="SUPFAM" id="SSF102405">
    <property type="entry name" value="MCP/YpsA-like"/>
    <property type="match status" value="1"/>
</dbReference>
<reference key="1">
    <citation type="journal article" date="2002" name="Lancet">
        <title>Genome and virulence determinants of high virulence community-acquired MRSA.</title>
        <authorList>
            <person name="Baba T."/>
            <person name="Takeuchi F."/>
            <person name="Kuroda M."/>
            <person name="Yuzawa H."/>
            <person name="Aoki K."/>
            <person name="Oguchi A."/>
            <person name="Nagai Y."/>
            <person name="Iwama N."/>
            <person name="Asano K."/>
            <person name="Naimi T."/>
            <person name="Kuroda H."/>
            <person name="Cui L."/>
            <person name="Yamamoto K."/>
            <person name="Hiramatsu K."/>
        </authorList>
    </citation>
    <scope>NUCLEOTIDE SEQUENCE [LARGE SCALE GENOMIC DNA]</scope>
    <source>
        <strain>MW2</strain>
    </source>
</reference>
<sequence>MVKTVYVTGYKSFELNIFKDDAPEVHYLKQFIKHKIEQLLDEGLEWVLIQGQMGIELWTAEVVIELQRTYDSLKFAVITPFQGHTEKWNEHNQSKYANIIKHADYVDSIFHTSYQGPFQFKQADQFMLEHSDQTLLIYDEEQEASPKFFKQMLVDFMDKTNYTCDIVTFDELTAFINDLQWSEDQSF</sequence>
<evidence type="ECO:0000255" key="1">
    <source>
        <dbReference type="HAMAP-Rule" id="MF_01575"/>
    </source>
</evidence>
<name>Y1336_STAAW</name>
<comment type="similarity">
    <text evidence="1">Belongs to the UPF0398 family.</text>
</comment>
<protein>
    <recommendedName>
        <fullName evidence="1">UPF0398 protein MW1336</fullName>
    </recommendedName>
</protein>
<feature type="chain" id="PRO_0000267173" description="UPF0398 protein MW1336">
    <location>
        <begin position="1"/>
        <end position="187"/>
    </location>
</feature>
<organism>
    <name type="scientific">Staphylococcus aureus (strain MW2)</name>
    <dbReference type="NCBI Taxonomy" id="196620"/>
    <lineage>
        <taxon>Bacteria</taxon>
        <taxon>Bacillati</taxon>
        <taxon>Bacillota</taxon>
        <taxon>Bacilli</taxon>
        <taxon>Bacillales</taxon>
        <taxon>Staphylococcaceae</taxon>
        <taxon>Staphylococcus</taxon>
    </lineage>
</organism>
<gene>
    <name type="ordered locus">MW1336</name>
</gene>
<proteinExistence type="inferred from homology"/>
<accession>Q7A0V5</accession>